<proteinExistence type="inferred from homology"/>
<organism>
    <name type="scientific">Xanthomonas oryzae pv. oryzae (strain KACC10331 / KXO85)</name>
    <dbReference type="NCBI Taxonomy" id="291331"/>
    <lineage>
        <taxon>Bacteria</taxon>
        <taxon>Pseudomonadati</taxon>
        <taxon>Pseudomonadota</taxon>
        <taxon>Gammaproteobacteria</taxon>
        <taxon>Lysobacterales</taxon>
        <taxon>Lysobacteraceae</taxon>
        <taxon>Xanthomonas</taxon>
    </lineage>
</organism>
<accession>Q5GUY8</accession>
<evidence type="ECO:0000255" key="1">
    <source>
        <dbReference type="HAMAP-Rule" id="MF_00012"/>
    </source>
</evidence>
<reference key="1">
    <citation type="journal article" date="2005" name="Nucleic Acids Res.">
        <title>The genome sequence of Xanthomonas oryzae pathovar oryzae KACC10331, the bacterial blight pathogen of rice.</title>
        <authorList>
            <person name="Lee B.-M."/>
            <person name="Park Y.-J."/>
            <person name="Park D.-S."/>
            <person name="Kang H.-W."/>
            <person name="Kim J.-G."/>
            <person name="Song E.-S."/>
            <person name="Park I.-C."/>
            <person name="Yoon U.-H."/>
            <person name="Hahn J.-H."/>
            <person name="Koo B.-S."/>
            <person name="Lee G.-B."/>
            <person name="Kim H."/>
            <person name="Park H.-S."/>
            <person name="Yoon K.-O."/>
            <person name="Kim J.-H."/>
            <person name="Jung C.-H."/>
            <person name="Koh N.-H."/>
            <person name="Seo J.-S."/>
            <person name="Go S.-J."/>
        </authorList>
    </citation>
    <scope>NUCLEOTIDE SEQUENCE [LARGE SCALE GENOMIC DNA]</scope>
    <source>
        <strain>KACC10331 / KXO85</strain>
    </source>
</reference>
<gene>
    <name evidence="1" type="primary">ilvD</name>
    <name type="ordered locus">XOO4231</name>
</gene>
<dbReference type="EC" id="4.2.1.9" evidence="1"/>
<dbReference type="EMBL" id="AE013598">
    <property type="protein sequence ID" value="AAW77485.1"/>
    <property type="molecule type" value="Genomic_DNA"/>
</dbReference>
<dbReference type="SMR" id="Q5GUY8"/>
<dbReference type="STRING" id="291331.XOO4231"/>
<dbReference type="KEGG" id="xoo:XOO4231"/>
<dbReference type="PATRIC" id="fig|291331.8.peg.4695"/>
<dbReference type="HOGENOM" id="CLU_014271_4_2_6"/>
<dbReference type="UniPathway" id="UPA00047">
    <property type="reaction ID" value="UER00057"/>
</dbReference>
<dbReference type="UniPathway" id="UPA00049">
    <property type="reaction ID" value="UER00061"/>
</dbReference>
<dbReference type="Proteomes" id="UP000006735">
    <property type="component" value="Chromosome"/>
</dbReference>
<dbReference type="GO" id="GO:0005829">
    <property type="term" value="C:cytosol"/>
    <property type="evidence" value="ECO:0007669"/>
    <property type="project" value="TreeGrafter"/>
</dbReference>
<dbReference type="GO" id="GO:0051537">
    <property type="term" value="F:2 iron, 2 sulfur cluster binding"/>
    <property type="evidence" value="ECO:0007669"/>
    <property type="project" value="UniProtKB-UniRule"/>
</dbReference>
<dbReference type="GO" id="GO:0004160">
    <property type="term" value="F:dihydroxy-acid dehydratase activity"/>
    <property type="evidence" value="ECO:0007669"/>
    <property type="project" value="UniProtKB-UniRule"/>
</dbReference>
<dbReference type="GO" id="GO:0000287">
    <property type="term" value="F:magnesium ion binding"/>
    <property type="evidence" value="ECO:0007669"/>
    <property type="project" value="UniProtKB-UniRule"/>
</dbReference>
<dbReference type="GO" id="GO:0009097">
    <property type="term" value="P:isoleucine biosynthetic process"/>
    <property type="evidence" value="ECO:0007669"/>
    <property type="project" value="UniProtKB-UniRule"/>
</dbReference>
<dbReference type="GO" id="GO:0009099">
    <property type="term" value="P:L-valine biosynthetic process"/>
    <property type="evidence" value="ECO:0007669"/>
    <property type="project" value="UniProtKB-UniRule"/>
</dbReference>
<dbReference type="FunFam" id="3.50.30.80:FF:000001">
    <property type="entry name" value="Dihydroxy-acid dehydratase"/>
    <property type="match status" value="1"/>
</dbReference>
<dbReference type="Gene3D" id="3.50.30.80">
    <property type="entry name" value="IlvD/EDD C-terminal domain-like"/>
    <property type="match status" value="1"/>
</dbReference>
<dbReference type="HAMAP" id="MF_00012">
    <property type="entry name" value="IlvD"/>
    <property type="match status" value="1"/>
</dbReference>
<dbReference type="InterPro" id="IPR042096">
    <property type="entry name" value="Dihydro-acid_dehy_C"/>
</dbReference>
<dbReference type="InterPro" id="IPR004404">
    <property type="entry name" value="DihydroxyA_deHydtase"/>
</dbReference>
<dbReference type="InterPro" id="IPR020558">
    <property type="entry name" value="DiOHA_6PGluconate_deHydtase_CS"/>
</dbReference>
<dbReference type="InterPro" id="IPR056740">
    <property type="entry name" value="ILV_EDD_C"/>
</dbReference>
<dbReference type="InterPro" id="IPR000581">
    <property type="entry name" value="ILV_EDD_N"/>
</dbReference>
<dbReference type="InterPro" id="IPR037237">
    <property type="entry name" value="IlvD/EDD_N"/>
</dbReference>
<dbReference type="NCBIfam" id="TIGR00110">
    <property type="entry name" value="ilvD"/>
    <property type="match status" value="1"/>
</dbReference>
<dbReference type="NCBIfam" id="NF009103">
    <property type="entry name" value="PRK12448.1"/>
    <property type="match status" value="1"/>
</dbReference>
<dbReference type="PANTHER" id="PTHR43661">
    <property type="entry name" value="D-XYLONATE DEHYDRATASE"/>
    <property type="match status" value="1"/>
</dbReference>
<dbReference type="PANTHER" id="PTHR43661:SF3">
    <property type="entry name" value="D-XYLONATE DEHYDRATASE YAGF-RELATED"/>
    <property type="match status" value="1"/>
</dbReference>
<dbReference type="Pfam" id="PF24877">
    <property type="entry name" value="ILV_EDD_C"/>
    <property type="match status" value="1"/>
</dbReference>
<dbReference type="Pfam" id="PF00920">
    <property type="entry name" value="ILVD_EDD_N"/>
    <property type="match status" value="1"/>
</dbReference>
<dbReference type="SUPFAM" id="SSF143975">
    <property type="entry name" value="IlvD/EDD N-terminal domain-like"/>
    <property type="match status" value="1"/>
</dbReference>
<dbReference type="SUPFAM" id="SSF52016">
    <property type="entry name" value="LeuD/IlvD-like"/>
    <property type="match status" value="1"/>
</dbReference>
<dbReference type="PROSITE" id="PS00886">
    <property type="entry name" value="ILVD_EDD_1"/>
    <property type="match status" value="1"/>
</dbReference>
<dbReference type="PROSITE" id="PS00887">
    <property type="entry name" value="ILVD_EDD_2"/>
    <property type="match status" value="1"/>
</dbReference>
<name>ILVD_XANOR</name>
<protein>
    <recommendedName>
        <fullName evidence="1">Dihydroxy-acid dehydratase</fullName>
        <shortName evidence="1">DAD</shortName>
        <ecNumber evidence="1">4.2.1.9</ecNumber>
    </recommendedName>
</protein>
<sequence length="612" mass="64929">MPEYRSKTSTHGRNMAGARALWRATGMQDGDFQKPIIAIANSFTQFVPGHVHLKDLGQLVAREIERVGGVAKEFDTIAVDDGIAMGHDGMLYSLPSREIIADSVEYMVNAHCADALVCISNCDKITPGMLMAALRLNIPTVFVSGGPMEAGKTALAEHKLDLIDAMVIAADDSASDEKVAEFERSACPTCGSCSGMFTANSMNCLTEALGLSLPGNGTVVATHADREQLFLRAGRVAVELCHRWYGGEDPTALPRGIATFEAFENAMTLDIAMGGSTNTILHLLAAAQEGEVPFGMQDIDRLSKRVPQLCKVAPNTPKYHIEDVHRAGGIMAILGELARGGLLHTTAATVHARTLADAIAHWDVTQTVDENVHTFYKAGPAGIPTQIAFSQATRWDSLDTDRSEGCIRDVAHALSQEGGLAVLYGNIARDGCVVKTAGVDESIHVFEGTARVFESQDAAVKSILADEVKAGDVVVIRYEGPKGGPGMQEMLYPTSYLKSKGLGKQCALLTDGRFSGGTSGLSIGHASPEAAAGGAIGLVRDGDKILIDIPNRGINLLISDEALASRRAEQDAKGWKPVEVRPRKVTTALKAYALLATSADKGAVRDKALLDG</sequence>
<keyword id="KW-0001">2Fe-2S</keyword>
<keyword id="KW-0028">Amino-acid biosynthesis</keyword>
<keyword id="KW-0100">Branched-chain amino acid biosynthesis</keyword>
<keyword id="KW-0408">Iron</keyword>
<keyword id="KW-0411">Iron-sulfur</keyword>
<keyword id="KW-0456">Lyase</keyword>
<keyword id="KW-0460">Magnesium</keyword>
<keyword id="KW-0479">Metal-binding</keyword>
<keyword id="KW-1185">Reference proteome</keyword>
<feature type="chain" id="PRO_0000225437" description="Dihydroxy-acid dehydratase">
    <location>
        <begin position="1"/>
        <end position="612"/>
    </location>
</feature>
<feature type="active site" description="Proton acceptor" evidence="1">
    <location>
        <position position="515"/>
    </location>
</feature>
<feature type="binding site" evidence="1">
    <location>
        <position position="81"/>
    </location>
    <ligand>
        <name>Mg(2+)</name>
        <dbReference type="ChEBI" id="CHEBI:18420"/>
    </ligand>
</feature>
<feature type="binding site" evidence="1">
    <location>
        <position position="122"/>
    </location>
    <ligand>
        <name>[2Fe-2S] cluster</name>
        <dbReference type="ChEBI" id="CHEBI:190135"/>
    </ligand>
</feature>
<feature type="binding site" evidence="1">
    <location>
        <position position="123"/>
    </location>
    <ligand>
        <name>Mg(2+)</name>
        <dbReference type="ChEBI" id="CHEBI:18420"/>
    </ligand>
</feature>
<feature type="binding site" description="via carbamate group" evidence="1">
    <location>
        <position position="124"/>
    </location>
    <ligand>
        <name>Mg(2+)</name>
        <dbReference type="ChEBI" id="CHEBI:18420"/>
    </ligand>
</feature>
<feature type="binding site" evidence="1">
    <location>
        <position position="193"/>
    </location>
    <ligand>
        <name>[2Fe-2S] cluster</name>
        <dbReference type="ChEBI" id="CHEBI:190135"/>
    </ligand>
</feature>
<feature type="binding site" evidence="1">
    <location>
        <position position="489"/>
    </location>
    <ligand>
        <name>Mg(2+)</name>
        <dbReference type="ChEBI" id="CHEBI:18420"/>
    </ligand>
</feature>
<feature type="modified residue" description="N6-carboxylysine" evidence="1">
    <location>
        <position position="124"/>
    </location>
</feature>
<comment type="function">
    <text evidence="1">Functions in the biosynthesis of branched-chain amino acids. Catalyzes the dehydration of (2R,3R)-2,3-dihydroxy-3-methylpentanoate (2,3-dihydroxy-3-methylvalerate) into 2-oxo-3-methylpentanoate (2-oxo-3-methylvalerate) and of (2R)-2,3-dihydroxy-3-methylbutanoate (2,3-dihydroxyisovalerate) into 2-oxo-3-methylbutanoate (2-oxoisovalerate), the penultimate precursor to L-isoleucine and L-valine, respectively.</text>
</comment>
<comment type="catalytic activity">
    <reaction evidence="1">
        <text>(2R)-2,3-dihydroxy-3-methylbutanoate = 3-methyl-2-oxobutanoate + H2O</text>
        <dbReference type="Rhea" id="RHEA:24809"/>
        <dbReference type="ChEBI" id="CHEBI:11851"/>
        <dbReference type="ChEBI" id="CHEBI:15377"/>
        <dbReference type="ChEBI" id="CHEBI:49072"/>
        <dbReference type="EC" id="4.2.1.9"/>
    </reaction>
    <physiologicalReaction direction="left-to-right" evidence="1">
        <dbReference type="Rhea" id="RHEA:24810"/>
    </physiologicalReaction>
</comment>
<comment type="catalytic activity">
    <reaction evidence="1">
        <text>(2R,3R)-2,3-dihydroxy-3-methylpentanoate = (S)-3-methyl-2-oxopentanoate + H2O</text>
        <dbReference type="Rhea" id="RHEA:27694"/>
        <dbReference type="ChEBI" id="CHEBI:15377"/>
        <dbReference type="ChEBI" id="CHEBI:35146"/>
        <dbReference type="ChEBI" id="CHEBI:49258"/>
        <dbReference type="EC" id="4.2.1.9"/>
    </reaction>
    <physiologicalReaction direction="left-to-right" evidence="1">
        <dbReference type="Rhea" id="RHEA:27695"/>
    </physiologicalReaction>
</comment>
<comment type="cofactor">
    <cofactor evidence="1">
        <name>[2Fe-2S] cluster</name>
        <dbReference type="ChEBI" id="CHEBI:190135"/>
    </cofactor>
    <text evidence="1">Binds 1 [2Fe-2S] cluster per subunit. This cluster acts as a Lewis acid cofactor.</text>
</comment>
<comment type="cofactor">
    <cofactor evidence="1">
        <name>Mg(2+)</name>
        <dbReference type="ChEBI" id="CHEBI:18420"/>
    </cofactor>
</comment>
<comment type="pathway">
    <text evidence="1">Amino-acid biosynthesis; L-isoleucine biosynthesis; L-isoleucine from 2-oxobutanoate: step 3/4.</text>
</comment>
<comment type="pathway">
    <text evidence="1">Amino-acid biosynthesis; L-valine biosynthesis; L-valine from pyruvate: step 3/4.</text>
</comment>
<comment type="subunit">
    <text evidence="1">Homodimer.</text>
</comment>
<comment type="similarity">
    <text evidence="1">Belongs to the IlvD/Edd family.</text>
</comment>